<feature type="chain" id="PRO_1000091083" description="UDP-N-acetylmuramate--L-alanine ligase">
    <location>
        <begin position="1"/>
        <end position="465"/>
    </location>
</feature>
<feature type="binding site" evidence="1">
    <location>
        <begin position="112"/>
        <end position="118"/>
    </location>
    <ligand>
        <name>ATP</name>
        <dbReference type="ChEBI" id="CHEBI:30616"/>
    </ligand>
</feature>
<name>MURC_BURCJ</name>
<comment type="function">
    <text evidence="1">Cell wall formation.</text>
</comment>
<comment type="catalytic activity">
    <reaction evidence="1">
        <text>UDP-N-acetyl-alpha-D-muramate + L-alanine + ATP = UDP-N-acetyl-alpha-D-muramoyl-L-alanine + ADP + phosphate + H(+)</text>
        <dbReference type="Rhea" id="RHEA:23372"/>
        <dbReference type="ChEBI" id="CHEBI:15378"/>
        <dbReference type="ChEBI" id="CHEBI:30616"/>
        <dbReference type="ChEBI" id="CHEBI:43474"/>
        <dbReference type="ChEBI" id="CHEBI:57972"/>
        <dbReference type="ChEBI" id="CHEBI:70757"/>
        <dbReference type="ChEBI" id="CHEBI:83898"/>
        <dbReference type="ChEBI" id="CHEBI:456216"/>
        <dbReference type="EC" id="6.3.2.8"/>
    </reaction>
</comment>
<comment type="pathway">
    <text evidence="1">Cell wall biogenesis; peptidoglycan biosynthesis.</text>
</comment>
<comment type="subcellular location">
    <subcellularLocation>
        <location evidence="1">Cytoplasm</location>
    </subcellularLocation>
</comment>
<comment type="similarity">
    <text evidence="1">Belongs to the MurCDEF family.</text>
</comment>
<reference key="1">
    <citation type="journal article" date="2009" name="J. Bacteriol.">
        <title>The genome of Burkholderia cenocepacia J2315, an epidemic pathogen of cystic fibrosis patients.</title>
        <authorList>
            <person name="Holden M.T."/>
            <person name="Seth-Smith H.M."/>
            <person name="Crossman L.C."/>
            <person name="Sebaihia M."/>
            <person name="Bentley S.D."/>
            <person name="Cerdeno-Tarraga A.M."/>
            <person name="Thomson N.R."/>
            <person name="Bason N."/>
            <person name="Quail M.A."/>
            <person name="Sharp S."/>
            <person name="Cherevach I."/>
            <person name="Churcher C."/>
            <person name="Goodhead I."/>
            <person name="Hauser H."/>
            <person name="Holroyd N."/>
            <person name="Mungall K."/>
            <person name="Scott P."/>
            <person name="Walker D."/>
            <person name="White B."/>
            <person name="Rose H."/>
            <person name="Iversen P."/>
            <person name="Mil-Homens D."/>
            <person name="Rocha E.P."/>
            <person name="Fialho A.M."/>
            <person name="Baldwin A."/>
            <person name="Dowson C."/>
            <person name="Barrell B.G."/>
            <person name="Govan J.R."/>
            <person name="Vandamme P."/>
            <person name="Hart C.A."/>
            <person name="Mahenthiralingam E."/>
            <person name="Parkhill J."/>
        </authorList>
    </citation>
    <scope>NUCLEOTIDE SEQUENCE [LARGE SCALE GENOMIC DNA]</scope>
    <source>
        <strain>ATCC BAA-245 / DSM 16553 / LMG 16656 / NCTC 13227 / J2315 / CF5610</strain>
    </source>
</reference>
<evidence type="ECO:0000255" key="1">
    <source>
        <dbReference type="HAMAP-Rule" id="MF_00046"/>
    </source>
</evidence>
<gene>
    <name evidence="1" type="primary">murC</name>
    <name type="ordered locus">BceJ2315_33990</name>
    <name type="ORF">BCAL3461</name>
</gene>
<dbReference type="EC" id="6.3.2.8" evidence="1"/>
<dbReference type="EMBL" id="AM747720">
    <property type="protein sequence ID" value="CAR53784.1"/>
    <property type="molecule type" value="Genomic_DNA"/>
</dbReference>
<dbReference type="RefSeq" id="WP_006487095.1">
    <property type="nucleotide sequence ID" value="NC_011000.1"/>
</dbReference>
<dbReference type="SMR" id="B4E6J1"/>
<dbReference type="KEGG" id="bcj:BCAL3461"/>
<dbReference type="eggNOG" id="COG0773">
    <property type="taxonomic scope" value="Bacteria"/>
</dbReference>
<dbReference type="HOGENOM" id="CLU_028104_2_2_4"/>
<dbReference type="BioCyc" id="BCEN216591:G1G1V-3849-MONOMER"/>
<dbReference type="UniPathway" id="UPA00219"/>
<dbReference type="Proteomes" id="UP000001035">
    <property type="component" value="Chromosome 1"/>
</dbReference>
<dbReference type="GO" id="GO:0005737">
    <property type="term" value="C:cytoplasm"/>
    <property type="evidence" value="ECO:0007669"/>
    <property type="project" value="UniProtKB-SubCell"/>
</dbReference>
<dbReference type="GO" id="GO:0005524">
    <property type="term" value="F:ATP binding"/>
    <property type="evidence" value="ECO:0007669"/>
    <property type="project" value="UniProtKB-UniRule"/>
</dbReference>
<dbReference type="GO" id="GO:0008763">
    <property type="term" value="F:UDP-N-acetylmuramate-L-alanine ligase activity"/>
    <property type="evidence" value="ECO:0007669"/>
    <property type="project" value="UniProtKB-UniRule"/>
</dbReference>
<dbReference type="GO" id="GO:0051301">
    <property type="term" value="P:cell division"/>
    <property type="evidence" value="ECO:0007669"/>
    <property type="project" value="UniProtKB-KW"/>
</dbReference>
<dbReference type="GO" id="GO:0071555">
    <property type="term" value="P:cell wall organization"/>
    <property type="evidence" value="ECO:0007669"/>
    <property type="project" value="UniProtKB-KW"/>
</dbReference>
<dbReference type="GO" id="GO:0009252">
    <property type="term" value="P:peptidoglycan biosynthetic process"/>
    <property type="evidence" value="ECO:0007669"/>
    <property type="project" value="UniProtKB-UniRule"/>
</dbReference>
<dbReference type="GO" id="GO:0008360">
    <property type="term" value="P:regulation of cell shape"/>
    <property type="evidence" value="ECO:0007669"/>
    <property type="project" value="UniProtKB-KW"/>
</dbReference>
<dbReference type="FunFam" id="3.40.1190.10:FF:000001">
    <property type="entry name" value="UDP-N-acetylmuramate--L-alanine ligase"/>
    <property type="match status" value="1"/>
</dbReference>
<dbReference type="Gene3D" id="3.90.190.20">
    <property type="entry name" value="Mur ligase, C-terminal domain"/>
    <property type="match status" value="1"/>
</dbReference>
<dbReference type="Gene3D" id="3.40.1190.10">
    <property type="entry name" value="Mur-like, catalytic domain"/>
    <property type="match status" value="1"/>
</dbReference>
<dbReference type="Gene3D" id="3.40.50.720">
    <property type="entry name" value="NAD(P)-binding Rossmann-like Domain"/>
    <property type="match status" value="1"/>
</dbReference>
<dbReference type="HAMAP" id="MF_00046">
    <property type="entry name" value="MurC"/>
    <property type="match status" value="1"/>
</dbReference>
<dbReference type="InterPro" id="IPR036565">
    <property type="entry name" value="Mur-like_cat_sf"/>
</dbReference>
<dbReference type="InterPro" id="IPR004101">
    <property type="entry name" value="Mur_ligase_C"/>
</dbReference>
<dbReference type="InterPro" id="IPR036615">
    <property type="entry name" value="Mur_ligase_C_dom_sf"/>
</dbReference>
<dbReference type="InterPro" id="IPR013221">
    <property type="entry name" value="Mur_ligase_cen"/>
</dbReference>
<dbReference type="InterPro" id="IPR000713">
    <property type="entry name" value="Mur_ligase_N"/>
</dbReference>
<dbReference type="InterPro" id="IPR050061">
    <property type="entry name" value="MurCDEF_pg_biosynth"/>
</dbReference>
<dbReference type="InterPro" id="IPR005758">
    <property type="entry name" value="UDP-N-AcMur_Ala_ligase_MurC"/>
</dbReference>
<dbReference type="NCBIfam" id="TIGR01082">
    <property type="entry name" value="murC"/>
    <property type="match status" value="1"/>
</dbReference>
<dbReference type="PANTHER" id="PTHR43445:SF3">
    <property type="entry name" value="UDP-N-ACETYLMURAMATE--L-ALANINE LIGASE"/>
    <property type="match status" value="1"/>
</dbReference>
<dbReference type="PANTHER" id="PTHR43445">
    <property type="entry name" value="UDP-N-ACETYLMURAMATE--L-ALANINE LIGASE-RELATED"/>
    <property type="match status" value="1"/>
</dbReference>
<dbReference type="Pfam" id="PF01225">
    <property type="entry name" value="Mur_ligase"/>
    <property type="match status" value="1"/>
</dbReference>
<dbReference type="Pfam" id="PF02875">
    <property type="entry name" value="Mur_ligase_C"/>
    <property type="match status" value="1"/>
</dbReference>
<dbReference type="Pfam" id="PF08245">
    <property type="entry name" value="Mur_ligase_M"/>
    <property type="match status" value="1"/>
</dbReference>
<dbReference type="SUPFAM" id="SSF51984">
    <property type="entry name" value="MurCD N-terminal domain"/>
    <property type="match status" value="1"/>
</dbReference>
<dbReference type="SUPFAM" id="SSF53623">
    <property type="entry name" value="MurD-like peptide ligases, catalytic domain"/>
    <property type="match status" value="1"/>
</dbReference>
<dbReference type="SUPFAM" id="SSF53244">
    <property type="entry name" value="MurD-like peptide ligases, peptide-binding domain"/>
    <property type="match status" value="1"/>
</dbReference>
<protein>
    <recommendedName>
        <fullName evidence="1">UDP-N-acetylmuramate--L-alanine ligase</fullName>
        <ecNumber evidence="1">6.3.2.8</ecNumber>
    </recommendedName>
    <alternativeName>
        <fullName evidence="1">UDP-N-acetylmuramoyl-L-alanine synthetase</fullName>
    </alternativeName>
</protein>
<accession>B4E6J1</accession>
<sequence length="465" mass="49008">MKHIVKHIHFVGIGGAGMSGIAEVLANLGYAVSGSDLSRNAVTDRLEALGARIAIGHDAANIEGANAVVVSTAVRSDNPEVLAARAKRVPIVQRAVMLAELMRLKQGIAIAGTHGKTTTTSLVASVLAAGGLDPTFVIGGRLISAGANARLGTGDFIVAEADESDASFLNLYPVIEVITNIDADHMDTYGHDFARLKQAFIEFTQRLPFYGSAVVCVDDPNVRQIIPFISKPVVRYGLSPDAQVRAEDIDARDGRMHFTVIREGRAPLAVVLNMPGLHNVQNALAAIAIATDLGVSDDAIQLALAEFNGVGRRFQRYGEVPSADGGQYTLIDDYGHHPVEMAATIAAARGAFPGRRLVLAFQPHRYTRTRDCFDDFVNVLSTVDALVLTEVYAAGEAAIPTASGDALSRALRAAGKVDPVFVATVDDVPDALAKVARNGDVVITMGAGSIGGVPAKLVQHIQQKA</sequence>
<keyword id="KW-0067">ATP-binding</keyword>
<keyword id="KW-0131">Cell cycle</keyword>
<keyword id="KW-0132">Cell division</keyword>
<keyword id="KW-0133">Cell shape</keyword>
<keyword id="KW-0961">Cell wall biogenesis/degradation</keyword>
<keyword id="KW-0963">Cytoplasm</keyword>
<keyword id="KW-0436">Ligase</keyword>
<keyword id="KW-0547">Nucleotide-binding</keyword>
<keyword id="KW-0573">Peptidoglycan synthesis</keyword>
<proteinExistence type="inferred from homology"/>
<organism>
    <name type="scientific">Burkholderia cenocepacia (strain ATCC BAA-245 / DSM 16553 / LMG 16656 / NCTC 13227 / J2315 / CF5610)</name>
    <name type="common">Burkholderia cepacia (strain J2315)</name>
    <dbReference type="NCBI Taxonomy" id="216591"/>
    <lineage>
        <taxon>Bacteria</taxon>
        <taxon>Pseudomonadati</taxon>
        <taxon>Pseudomonadota</taxon>
        <taxon>Betaproteobacteria</taxon>
        <taxon>Burkholderiales</taxon>
        <taxon>Burkholderiaceae</taxon>
        <taxon>Burkholderia</taxon>
        <taxon>Burkholderia cepacia complex</taxon>
    </lineage>
</organism>